<keyword id="KW-0028">Amino-acid biosynthesis</keyword>
<keyword id="KW-0963">Cytoplasm</keyword>
<keyword id="KW-0413">Isomerase</keyword>
<keyword id="KW-0457">Lysine biosynthesis</keyword>
<protein>
    <recommendedName>
        <fullName evidence="1">Diaminopimelate epimerase</fullName>
        <shortName evidence="1">DAP epimerase</shortName>
        <ecNumber evidence="1">5.1.1.7</ecNumber>
    </recommendedName>
    <alternativeName>
        <fullName evidence="1">PLP-independent amino acid racemase</fullName>
    </alternativeName>
</protein>
<feature type="chain" id="PRO_1000011896" description="Diaminopimelate epimerase">
    <location>
        <begin position="1"/>
        <end position="277"/>
    </location>
</feature>
<feature type="active site" description="Proton donor" evidence="1">
    <location>
        <position position="75"/>
    </location>
</feature>
<feature type="active site" description="Proton acceptor" evidence="1">
    <location>
        <position position="220"/>
    </location>
</feature>
<feature type="binding site" evidence="1">
    <location>
        <position position="13"/>
    </location>
    <ligand>
        <name>substrate</name>
    </ligand>
</feature>
<feature type="binding site" evidence="1">
    <location>
        <position position="46"/>
    </location>
    <ligand>
        <name>substrate</name>
    </ligand>
</feature>
<feature type="binding site" evidence="1">
    <location>
        <position position="66"/>
    </location>
    <ligand>
        <name>substrate</name>
    </ligand>
</feature>
<feature type="binding site" evidence="1">
    <location>
        <begin position="76"/>
        <end position="77"/>
    </location>
    <ligand>
        <name>substrate</name>
    </ligand>
</feature>
<feature type="binding site" evidence="1">
    <location>
        <position position="160"/>
    </location>
    <ligand>
        <name>substrate</name>
    </ligand>
</feature>
<feature type="binding site" evidence="1">
    <location>
        <position position="193"/>
    </location>
    <ligand>
        <name>substrate</name>
    </ligand>
</feature>
<feature type="binding site" evidence="1">
    <location>
        <begin position="211"/>
        <end position="212"/>
    </location>
    <ligand>
        <name>substrate</name>
    </ligand>
</feature>
<feature type="binding site" evidence="1">
    <location>
        <begin position="221"/>
        <end position="222"/>
    </location>
    <ligand>
        <name>substrate</name>
    </ligand>
</feature>
<feature type="site" description="Could be important to modulate the pK values of the two catalytic cysteine residues" evidence="1">
    <location>
        <position position="162"/>
    </location>
</feature>
<feature type="site" description="Could be important to modulate the pK values of the two catalytic cysteine residues" evidence="1">
    <location>
        <position position="211"/>
    </location>
</feature>
<feature type="site" description="Important for dimerization" evidence="1">
    <location>
        <position position="271"/>
    </location>
</feature>
<organism>
    <name type="scientific">Legionella pneumophila (strain Lens)</name>
    <dbReference type="NCBI Taxonomy" id="297245"/>
    <lineage>
        <taxon>Bacteria</taxon>
        <taxon>Pseudomonadati</taxon>
        <taxon>Pseudomonadota</taxon>
        <taxon>Gammaproteobacteria</taxon>
        <taxon>Legionellales</taxon>
        <taxon>Legionellaceae</taxon>
        <taxon>Legionella</taxon>
    </lineage>
</organism>
<sequence length="277" mass="29938">MGIKFTKMHGLGNDFIVLDGVNQSIQLTVEQIQKLANRHTGIGFDQCLLIESSQTEGIDFNYRIFNADGQEVGQCGNGARCIALFARYYGLTAKNKLTVATKTTLMDLIINEDNSVSVNMGVPRLAPGEIPLLADRQSPEYSLKLNNGNTVNLHAISVGNPHAVLLVENIDTAPVNSLGQQISFHPQFPEQVNVGFMQIVNHEKINLRVYERGCGETIACGSGAVAAAAIARLFYNLSDKITVHLPGGDLCIQWPCPTAPIILTGPAAFVYEGTLLS</sequence>
<comment type="function">
    <text evidence="1">Catalyzes the stereoinversion of LL-2,6-diaminopimelate (L,L-DAP) to meso-diaminopimelate (meso-DAP), a precursor of L-lysine and an essential component of the bacterial peptidoglycan.</text>
</comment>
<comment type="catalytic activity">
    <reaction evidence="1">
        <text>(2S,6S)-2,6-diaminopimelate = meso-2,6-diaminopimelate</text>
        <dbReference type="Rhea" id="RHEA:15393"/>
        <dbReference type="ChEBI" id="CHEBI:57609"/>
        <dbReference type="ChEBI" id="CHEBI:57791"/>
        <dbReference type="EC" id="5.1.1.7"/>
    </reaction>
</comment>
<comment type="pathway">
    <text evidence="1">Amino-acid biosynthesis; L-lysine biosynthesis via DAP pathway; DL-2,6-diaminopimelate from LL-2,6-diaminopimelate: step 1/1.</text>
</comment>
<comment type="subunit">
    <text evidence="1">Homodimer.</text>
</comment>
<comment type="subcellular location">
    <subcellularLocation>
        <location evidence="1">Cytoplasm</location>
    </subcellularLocation>
</comment>
<comment type="similarity">
    <text evidence="1">Belongs to the diaminopimelate epimerase family.</text>
</comment>
<proteinExistence type="inferred from homology"/>
<evidence type="ECO:0000255" key="1">
    <source>
        <dbReference type="HAMAP-Rule" id="MF_00197"/>
    </source>
</evidence>
<dbReference type="EC" id="5.1.1.7" evidence="1"/>
<dbReference type="EMBL" id="CR628337">
    <property type="protein sequence ID" value="CAH14637.1"/>
    <property type="molecule type" value="Genomic_DNA"/>
</dbReference>
<dbReference type="RefSeq" id="WP_011214639.1">
    <property type="nucleotide sequence ID" value="NC_006369.1"/>
</dbReference>
<dbReference type="SMR" id="Q5WZH5"/>
<dbReference type="KEGG" id="lpf:lpl0407"/>
<dbReference type="LegioList" id="lpl0407"/>
<dbReference type="HOGENOM" id="CLU_053306_1_1_6"/>
<dbReference type="UniPathway" id="UPA00034">
    <property type="reaction ID" value="UER00025"/>
</dbReference>
<dbReference type="Proteomes" id="UP000002517">
    <property type="component" value="Chromosome"/>
</dbReference>
<dbReference type="GO" id="GO:0005829">
    <property type="term" value="C:cytosol"/>
    <property type="evidence" value="ECO:0007669"/>
    <property type="project" value="TreeGrafter"/>
</dbReference>
<dbReference type="GO" id="GO:0008837">
    <property type="term" value="F:diaminopimelate epimerase activity"/>
    <property type="evidence" value="ECO:0007669"/>
    <property type="project" value="UniProtKB-UniRule"/>
</dbReference>
<dbReference type="GO" id="GO:0009089">
    <property type="term" value="P:lysine biosynthetic process via diaminopimelate"/>
    <property type="evidence" value="ECO:0007669"/>
    <property type="project" value="UniProtKB-UniRule"/>
</dbReference>
<dbReference type="FunFam" id="3.10.310.10:FF:000001">
    <property type="entry name" value="Diaminopimelate epimerase"/>
    <property type="match status" value="1"/>
</dbReference>
<dbReference type="Gene3D" id="3.10.310.10">
    <property type="entry name" value="Diaminopimelate Epimerase, Chain A, domain 1"/>
    <property type="match status" value="2"/>
</dbReference>
<dbReference type="HAMAP" id="MF_00197">
    <property type="entry name" value="DAP_epimerase"/>
    <property type="match status" value="1"/>
</dbReference>
<dbReference type="InterPro" id="IPR001653">
    <property type="entry name" value="DAP_epimerase_DapF"/>
</dbReference>
<dbReference type="NCBIfam" id="TIGR00652">
    <property type="entry name" value="DapF"/>
    <property type="match status" value="1"/>
</dbReference>
<dbReference type="PANTHER" id="PTHR31689:SF0">
    <property type="entry name" value="DIAMINOPIMELATE EPIMERASE"/>
    <property type="match status" value="1"/>
</dbReference>
<dbReference type="PANTHER" id="PTHR31689">
    <property type="entry name" value="DIAMINOPIMELATE EPIMERASE, CHLOROPLASTIC"/>
    <property type="match status" value="1"/>
</dbReference>
<dbReference type="Pfam" id="PF01678">
    <property type="entry name" value="DAP_epimerase"/>
    <property type="match status" value="2"/>
</dbReference>
<dbReference type="SUPFAM" id="SSF54506">
    <property type="entry name" value="Diaminopimelate epimerase-like"/>
    <property type="match status" value="2"/>
</dbReference>
<accession>Q5WZH5</accession>
<reference key="1">
    <citation type="journal article" date="2004" name="Nat. Genet.">
        <title>Evidence in the Legionella pneumophila genome for exploitation of host cell functions and high genome plasticity.</title>
        <authorList>
            <person name="Cazalet C."/>
            <person name="Rusniok C."/>
            <person name="Brueggemann H."/>
            <person name="Zidane N."/>
            <person name="Magnier A."/>
            <person name="Ma L."/>
            <person name="Tichit M."/>
            <person name="Jarraud S."/>
            <person name="Bouchier C."/>
            <person name="Vandenesch F."/>
            <person name="Kunst F."/>
            <person name="Etienne J."/>
            <person name="Glaser P."/>
            <person name="Buchrieser C."/>
        </authorList>
    </citation>
    <scope>NUCLEOTIDE SEQUENCE [LARGE SCALE GENOMIC DNA]</scope>
    <source>
        <strain>Lens</strain>
    </source>
</reference>
<gene>
    <name evidence="1" type="primary">dapF</name>
    <name type="ordered locus">lpl0407</name>
</gene>
<name>DAPF_LEGPL</name>